<evidence type="ECO:0000255" key="1">
    <source>
        <dbReference type="HAMAP-Rule" id="MF_00440"/>
    </source>
</evidence>
<keyword id="KW-0067">ATP-binding</keyword>
<keyword id="KW-0238">DNA-binding</keyword>
<keyword id="KW-0479">Metal-binding</keyword>
<keyword id="KW-0547">Nucleotide-binding</keyword>
<keyword id="KW-1185">Reference proteome</keyword>
<keyword id="KW-0678">Repressor</keyword>
<keyword id="KW-0804">Transcription</keyword>
<keyword id="KW-0805">Transcription regulation</keyword>
<keyword id="KW-0862">Zinc</keyword>
<keyword id="KW-0863">Zinc-finger</keyword>
<organism>
    <name type="scientific">Albidiferax ferrireducens (strain ATCC BAA-621 / DSM 15236 / T118)</name>
    <name type="common">Rhodoferax ferrireducens</name>
    <dbReference type="NCBI Taxonomy" id="338969"/>
    <lineage>
        <taxon>Bacteria</taxon>
        <taxon>Pseudomonadati</taxon>
        <taxon>Pseudomonadota</taxon>
        <taxon>Betaproteobacteria</taxon>
        <taxon>Burkholderiales</taxon>
        <taxon>Comamonadaceae</taxon>
        <taxon>Rhodoferax</taxon>
    </lineage>
</organism>
<name>NRDR_ALBFT</name>
<reference key="1">
    <citation type="submission" date="2006-02" db="EMBL/GenBank/DDBJ databases">
        <title>Complete sequence of chromosome of Rhodoferax ferrireducens DSM 15236.</title>
        <authorList>
            <person name="Copeland A."/>
            <person name="Lucas S."/>
            <person name="Lapidus A."/>
            <person name="Barry K."/>
            <person name="Detter J.C."/>
            <person name="Glavina del Rio T."/>
            <person name="Hammon N."/>
            <person name="Israni S."/>
            <person name="Pitluck S."/>
            <person name="Brettin T."/>
            <person name="Bruce D."/>
            <person name="Han C."/>
            <person name="Tapia R."/>
            <person name="Gilna P."/>
            <person name="Kiss H."/>
            <person name="Schmutz J."/>
            <person name="Larimer F."/>
            <person name="Land M."/>
            <person name="Kyrpides N."/>
            <person name="Ivanova N."/>
            <person name="Richardson P."/>
        </authorList>
    </citation>
    <scope>NUCLEOTIDE SEQUENCE [LARGE SCALE GENOMIC DNA]</scope>
    <source>
        <strain>ATCC BAA-621 / DSM 15236 / T118</strain>
    </source>
</reference>
<protein>
    <recommendedName>
        <fullName evidence="1">Transcriptional repressor NrdR</fullName>
    </recommendedName>
</protein>
<feature type="chain" id="PRO_0000264201" description="Transcriptional repressor NrdR">
    <location>
        <begin position="1"/>
        <end position="149"/>
    </location>
</feature>
<feature type="domain" description="ATP-cone" evidence="1">
    <location>
        <begin position="49"/>
        <end position="139"/>
    </location>
</feature>
<feature type="zinc finger region" evidence="1">
    <location>
        <begin position="3"/>
        <end position="34"/>
    </location>
</feature>
<sequence length="149" mass="17389">MKCPFCSHSETQVVETRISEDGDSIRRRRQCASCQKRFTTYERPDVAFPAIVKKDGRRIEYERAKLLASMTLALRKRPVSTEQVDGAVERIEEKLLMQGVRELPSARLGELVMRELKKLDKVAYVRFASVYRSFEDIDEFKTLVDEVRR</sequence>
<accession>Q21V28</accession>
<proteinExistence type="inferred from homology"/>
<dbReference type="EMBL" id="CP000267">
    <property type="protein sequence ID" value="ABD70375.1"/>
    <property type="molecule type" value="Genomic_DNA"/>
</dbReference>
<dbReference type="RefSeq" id="WP_011464943.1">
    <property type="nucleotide sequence ID" value="NC_007908.1"/>
</dbReference>
<dbReference type="SMR" id="Q21V28"/>
<dbReference type="STRING" id="338969.Rfer_2659"/>
<dbReference type="KEGG" id="rfr:Rfer_2659"/>
<dbReference type="eggNOG" id="COG1327">
    <property type="taxonomic scope" value="Bacteria"/>
</dbReference>
<dbReference type="HOGENOM" id="CLU_108412_0_0_4"/>
<dbReference type="OrthoDB" id="9807461at2"/>
<dbReference type="Proteomes" id="UP000008332">
    <property type="component" value="Chromosome"/>
</dbReference>
<dbReference type="GO" id="GO:0005524">
    <property type="term" value="F:ATP binding"/>
    <property type="evidence" value="ECO:0007669"/>
    <property type="project" value="UniProtKB-KW"/>
</dbReference>
<dbReference type="GO" id="GO:0003677">
    <property type="term" value="F:DNA binding"/>
    <property type="evidence" value="ECO:0007669"/>
    <property type="project" value="UniProtKB-KW"/>
</dbReference>
<dbReference type="GO" id="GO:0008270">
    <property type="term" value="F:zinc ion binding"/>
    <property type="evidence" value="ECO:0007669"/>
    <property type="project" value="UniProtKB-UniRule"/>
</dbReference>
<dbReference type="GO" id="GO:0045892">
    <property type="term" value="P:negative regulation of DNA-templated transcription"/>
    <property type="evidence" value="ECO:0007669"/>
    <property type="project" value="UniProtKB-UniRule"/>
</dbReference>
<dbReference type="HAMAP" id="MF_00440">
    <property type="entry name" value="NrdR"/>
    <property type="match status" value="1"/>
</dbReference>
<dbReference type="InterPro" id="IPR005144">
    <property type="entry name" value="ATP-cone_dom"/>
</dbReference>
<dbReference type="InterPro" id="IPR055173">
    <property type="entry name" value="NrdR-like_N"/>
</dbReference>
<dbReference type="InterPro" id="IPR003796">
    <property type="entry name" value="RNR_NrdR-like"/>
</dbReference>
<dbReference type="NCBIfam" id="TIGR00244">
    <property type="entry name" value="transcriptional regulator NrdR"/>
    <property type="match status" value="1"/>
</dbReference>
<dbReference type="PANTHER" id="PTHR30455">
    <property type="entry name" value="TRANSCRIPTIONAL REPRESSOR NRDR"/>
    <property type="match status" value="1"/>
</dbReference>
<dbReference type="PANTHER" id="PTHR30455:SF2">
    <property type="entry name" value="TRANSCRIPTIONAL REPRESSOR NRDR"/>
    <property type="match status" value="1"/>
</dbReference>
<dbReference type="Pfam" id="PF03477">
    <property type="entry name" value="ATP-cone"/>
    <property type="match status" value="1"/>
</dbReference>
<dbReference type="Pfam" id="PF22811">
    <property type="entry name" value="Zn_ribbon_NrdR"/>
    <property type="match status" value="1"/>
</dbReference>
<dbReference type="PROSITE" id="PS51161">
    <property type="entry name" value="ATP_CONE"/>
    <property type="match status" value="1"/>
</dbReference>
<comment type="function">
    <text evidence="1">Negatively regulates transcription of bacterial ribonucleotide reductase nrd genes and operons by binding to NrdR-boxes.</text>
</comment>
<comment type="cofactor">
    <cofactor evidence="1">
        <name>Zn(2+)</name>
        <dbReference type="ChEBI" id="CHEBI:29105"/>
    </cofactor>
    <text evidence="1">Binds 1 zinc ion.</text>
</comment>
<comment type="similarity">
    <text evidence="1">Belongs to the NrdR family.</text>
</comment>
<gene>
    <name evidence="1" type="primary">nrdR</name>
    <name type="ordered locus">Rfer_2659</name>
</gene>